<evidence type="ECO:0000250" key="1"/>
<evidence type="ECO:0000250" key="2">
    <source>
        <dbReference type="UniProtKB" id="P43021"/>
    </source>
</evidence>
<evidence type="ECO:0000250" key="3">
    <source>
        <dbReference type="UniProtKB" id="Q91620"/>
    </source>
</evidence>
<evidence type="ECO:0000255" key="4"/>
<evidence type="ECO:0000269" key="5">
    <source>
    </source>
</evidence>
<evidence type="ECO:0000305" key="6"/>
<evidence type="ECO:0000312" key="7">
    <source>
        <dbReference type="EMBL" id="AAL02115.1"/>
    </source>
</evidence>
<feature type="signal peptide" evidence="4">
    <location>
        <begin position="1"/>
        <end position="18"/>
    </location>
</feature>
<feature type="propeptide" id="PRO_0000274255" evidence="4">
    <location>
        <begin position="19"/>
        <end position="283"/>
    </location>
</feature>
<feature type="chain" id="PRO_0000274256" description="Nodal homolog 2-B">
    <location>
        <begin position="284"/>
        <end position="384" status="greater than"/>
    </location>
</feature>
<feature type="glycosylation site" description="N-linked (GlcNAc...) asparagine" evidence="4">
    <location>
        <position position="71"/>
    </location>
</feature>
<feature type="glycosylation site" description="N-linked (GlcNAc...) asparagine" evidence="4">
    <location>
        <position position="173"/>
    </location>
</feature>
<feature type="glycosylation site" description="N-linked (GlcNAc...) asparagine" evidence="4">
    <location>
        <position position="344"/>
    </location>
</feature>
<feature type="disulfide bond" evidence="2">
    <location>
        <begin position="306"/>
        <end position="372"/>
    </location>
</feature>
<feature type="disulfide bond" description="Interchain" evidence="2">
    <location>
        <position position="369"/>
    </location>
</feature>
<feature type="non-terminal residue" evidence="7">
    <location>
        <position position="384"/>
    </location>
</feature>
<accession>Q90XB7</accession>
<comment type="function">
    <text evidence="1">Cooperation and regulatory loops of multiple nodals are essential for mesendoderm patterning in early embryos. Essential for mesoderm formation and axial patterning during embryonic development. Activates the activin-like signaling pathway to induce dorsal and ventral mesoderm in animal cap ectoderm. In addition, also dorsalizes ventral marginal zone (VMZ) tissues during gastrulation. Induces muscle actin. Appears to act as both a short-range and long-range morphogen. The unprocessed protein inhibits bmp- and wnt-signaling (By similarity).</text>
</comment>
<comment type="subunit">
    <text evidence="2 3">Homodimer; disulfide-linked. Forms heterodimers with the TGF-beta family member derriere. Interacts with tsku; enhances nodal2 activity.</text>
</comment>
<comment type="subcellular location">
    <subcellularLocation>
        <location evidence="1">Secreted</location>
    </subcellularLocation>
</comment>
<comment type="induction">
    <text evidence="5">By dorsal-mesoderm inducing signals including activin, vegt and other nodal-related proteins. Beta-catenin potentiates the response to activin and vegt. Not induced by wnt8 alone, but wnt8 potentiates the response to activin.</text>
</comment>
<comment type="domain">
    <text evidence="1">The pro-region is necessary but not sufficient for wnt-inhibitory activity. The central region is required for muscle induction activity (By similarity).</text>
</comment>
<comment type="similarity">
    <text evidence="4">Belongs to the TGF-beta family.</text>
</comment>
<proteinExistence type="evidence at transcript level"/>
<gene>
    <name type="primary">nodal2-b</name>
</gene>
<organism>
    <name type="scientific">Xenopus laevis</name>
    <name type="common">African clawed frog</name>
    <dbReference type="NCBI Taxonomy" id="8355"/>
    <lineage>
        <taxon>Eukaryota</taxon>
        <taxon>Metazoa</taxon>
        <taxon>Chordata</taxon>
        <taxon>Craniata</taxon>
        <taxon>Vertebrata</taxon>
        <taxon>Euteleostomi</taxon>
        <taxon>Amphibia</taxon>
        <taxon>Batrachia</taxon>
        <taxon>Anura</taxon>
        <taxon>Pipoidea</taxon>
        <taxon>Pipidae</taxon>
        <taxon>Xenopodinae</taxon>
        <taxon>Xenopus</taxon>
        <taxon>Xenopus</taxon>
    </lineage>
</organism>
<reference evidence="6 7" key="1">
    <citation type="journal article" date="2002" name="Int. J. Dev. Biol.">
        <title>Multiple interactions between maternally-activated signalling pathways control Xenopus nodal-related genes.</title>
        <authorList>
            <person name="Rex M."/>
            <person name="Hilton E."/>
            <person name="Old R.W."/>
        </authorList>
    </citation>
    <scope>NUCLEOTIDE SEQUENCE [GENOMIC DNA]</scope>
    <scope>INDUCTION</scope>
</reference>
<sequence length="384" mass="43542">MASLGAILLFAIASLMHGRPIHSDRKGAKIPLAGSNLGYKKSSNMYGSRLFQGMRYPPSMIQLYQTLILGNDTDLSILEYPVLQESDAVLSFLQKVSCVVVGNRWTLSFDMSSISSTNELKLAELRIRLPSFERPQDVTVEIYHTKKGQENLFMGSFKTNPSVAMGSSWKVFNLTRMLQYYLHQGEQFTNDEYIEVKNLHEGAKPQVIKRRARTEVEEGLQGNKDNTPTSSFPTERVVLVVFTRDKPTANHFGSPSLIHTVESSKYVMSESTVRVADARRHRRNQKTKNTIIMNTIPSRSAGNPLCRRVDMIVDFEKIKWGDRIVYPKRFNAYRCEGACPIPLNETFKPTNHAYIKSLVKLYDQEKVECSSCVPVKMSPLSMLL</sequence>
<dbReference type="EMBL" id="AF410801">
    <property type="protein sequence ID" value="AAL02115.1"/>
    <property type="molecule type" value="Genomic_DNA"/>
</dbReference>
<dbReference type="GlyCosmos" id="Q90XB7">
    <property type="glycosylation" value="3 sites, No reported glycans"/>
</dbReference>
<dbReference type="Proteomes" id="UP000186698">
    <property type="component" value="Unplaced"/>
</dbReference>
<dbReference type="GO" id="GO:0005615">
    <property type="term" value="C:extracellular space"/>
    <property type="evidence" value="ECO:0000250"/>
    <property type="project" value="UniProtKB"/>
</dbReference>
<dbReference type="GO" id="GO:0005125">
    <property type="term" value="F:cytokine activity"/>
    <property type="evidence" value="ECO:0000318"/>
    <property type="project" value="GO_Central"/>
</dbReference>
<dbReference type="GO" id="GO:0008083">
    <property type="term" value="F:growth factor activity"/>
    <property type="evidence" value="ECO:0007669"/>
    <property type="project" value="UniProtKB-KW"/>
</dbReference>
<dbReference type="GO" id="GO:0016015">
    <property type="term" value="F:morphogen activity"/>
    <property type="evidence" value="ECO:0000250"/>
    <property type="project" value="UniProtKB"/>
</dbReference>
<dbReference type="GO" id="GO:0048320">
    <property type="term" value="P:axial mesoderm formation"/>
    <property type="evidence" value="ECO:0000250"/>
    <property type="project" value="UniProtKB"/>
</dbReference>
<dbReference type="GO" id="GO:0007368">
    <property type="term" value="P:determination of left/right symmetry"/>
    <property type="evidence" value="ECO:0000250"/>
    <property type="project" value="UniProtKB"/>
</dbReference>
<dbReference type="GO" id="GO:0001702">
    <property type="term" value="P:gastrulation with mouth forming second"/>
    <property type="evidence" value="ECO:0000250"/>
    <property type="project" value="UniProtKB"/>
</dbReference>
<dbReference type="GO" id="GO:0001707">
    <property type="term" value="P:mesoderm formation"/>
    <property type="evidence" value="ECO:0000250"/>
    <property type="project" value="UniProtKB"/>
</dbReference>
<dbReference type="GO" id="GO:0030111">
    <property type="term" value="P:regulation of Wnt signaling pathway"/>
    <property type="evidence" value="ECO:0000250"/>
    <property type="project" value="UniProtKB"/>
</dbReference>
<dbReference type="FunFam" id="2.10.90.10:FF:000001">
    <property type="entry name" value="Bone morphogenetic protein 4"/>
    <property type="match status" value="1"/>
</dbReference>
<dbReference type="Gene3D" id="2.60.120.970">
    <property type="match status" value="1"/>
</dbReference>
<dbReference type="Gene3D" id="2.10.90.10">
    <property type="entry name" value="Cystine-knot cytokines"/>
    <property type="match status" value="1"/>
</dbReference>
<dbReference type="InterPro" id="IPR029034">
    <property type="entry name" value="Cystine-knot_cytokine"/>
</dbReference>
<dbReference type="InterPro" id="IPR001839">
    <property type="entry name" value="TGF-b_C"/>
</dbReference>
<dbReference type="InterPro" id="IPR001111">
    <property type="entry name" value="TGF-b_propeptide"/>
</dbReference>
<dbReference type="InterPro" id="IPR015615">
    <property type="entry name" value="TGF-beta-rel"/>
</dbReference>
<dbReference type="InterPro" id="IPR017948">
    <property type="entry name" value="TGFb_CS"/>
</dbReference>
<dbReference type="PANTHER" id="PTHR11848:SF159">
    <property type="entry name" value="NODAL HOMOLOG"/>
    <property type="match status" value="1"/>
</dbReference>
<dbReference type="PANTHER" id="PTHR11848">
    <property type="entry name" value="TGF-BETA FAMILY"/>
    <property type="match status" value="1"/>
</dbReference>
<dbReference type="Pfam" id="PF00019">
    <property type="entry name" value="TGF_beta"/>
    <property type="match status" value="1"/>
</dbReference>
<dbReference type="Pfam" id="PF00688">
    <property type="entry name" value="TGFb_propeptide"/>
    <property type="match status" value="1"/>
</dbReference>
<dbReference type="SMART" id="SM00204">
    <property type="entry name" value="TGFB"/>
    <property type="match status" value="1"/>
</dbReference>
<dbReference type="SUPFAM" id="SSF57501">
    <property type="entry name" value="Cystine-knot cytokines"/>
    <property type="match status" value="1"/>
</dbReference>
<dbReference type="PROSITE" id="PS00250">
    <property type="entry name" value="TGF_BETA_1"/>
    <property type="match status" value="1"/>
</dbReference>
<dbReference type="PROSITE" id="PS51362">
    <property type="entry name" value="TGF_BETA_2"/>
    <property type="match status" value="1"/>
</dbReference>
<protein>
    <recommendedName>
        <fullName>Nodal homolog 2-B</fullName>
    </recommendedName>
    <alternativeName>
        <fullName>Nodal-related protein 2-B</fullName>
    </alternativeName>
    <alternativeName>
        <fullName>Xnr2-B</fullName>
    </alternativeName>
</protein>
<keyword id="KW-0165">Cleavage on pair of basic residues</keyword>
<keyword id="KW-0217">Developmental protein</keyword>
<keyword id="KW-1015">Disulfide bond</keyword>
<keyword id="KW-0325">Glycoprotein</keyword>
<keyword id="KW-0339">Growth factor</keyword>
<keyword id="KW-1185">Reference proteome</keyword>
<keyword id="KW-0964">Secreted</keyword>
<keyword id="KW-0732">Signal</keyword>
<name>NOD2B_XENLA</name>